<gene>
    <name type="primary">yajC</name>
    <name type="ordered locus">MT2665</name>
</gene>
<proteinExistence type="inferred from homology"/>
<reference key="1">
    <citation type="journal article" date="2002" name="J. Bacteriol.">
        <title>Whole-genome comparison of Mycobacterium tuberculosis clinical and laboratory strains.</title>
        <authorList>
            <person name="Fleischmann R.D."/>
            <person name="Alland D."/>
            <person name="Eisen J.A."/>
            <person name="Carpenter L."/>
            <person name="White O."/>
            <person name="Peterson J.D."/>
            <person name="DeBoy R.T."/>
            <person name="Dodson R.J."/>
            <person name="Gwinn M.L."/>
            <person name="Haft D.H."/>
            <person name="Hickey E.K."/>
            <person name="Kolonay J.F."/>
            <person name="Nelson W.C."/>
            <person name="Umayam L.A."/>
            <person name="Ermolaeva M.D."/>
            <person name="Salzberg S.L."/>
            <person name="Delcher A."/>
            <person name="Utterback T.R."/>
            <person name="Weidman J.F."/>
            <person name="Khouri H.M."/>
            <person name="Gill J."/>
            <person name="Mikula A."/>
            <person name="Bishai W."/>
            <person name="Jacobs W.R. Jr."/>
            <person name="Venter J.C."/>
            <person name="Fraser C.M."/>
        </authorList>
    </citation>
    <scope>NUCLEOTIDE SEQUENCE [LARGE SCALE GENOMIC DNA]</scope>
    <source>
        <strain>CDC 1551 / Oshkosh</strain>
    </source>
</reference>
<feature type="chain" id="PRO_0000427528" description="Sec translocon accessory complex subunit YajC">
    <location>
        <begin position="1"/>
        <end position="115"/>
    </location>
</feature>
<feature type="transmembrane region" description="Helical" evidence="2">
    <location>
        <begin position="1"/>
        <end position="21"/>
    </location>
</feature>
<feature type="region of interest" description="Disordered" evidence="3">
    <location>
        <begin position="96"/>
        <end position="115"/>
    </location>
</feature>
<feature type="compositionally biased region" description="Acidic residues" evidence="3">
    <location>
        <begin position="96"/>
        <end position="105"/>
    </location>
</feature>
<feature type="compositionally biased region" description="Basic and acidic residues" evidence="3">
    <location>
        <begin position="106"/>
        <end position="115"/>
    </location>
</feature>
<keyword id="KW-1003">Cell membrane</keyword>
<keyword id="KW-0472">Membrane</keyword>
<keyword id="KW-0653">Protein transport</keyword>
<keyword id="KW-1185">Reference proteome</keyword>
<keyword id="KW-0811">Translocation</keyword>
<keyword id="KW-0812">Transmembrane</keyword>
<keyword id="KW-1133">Transmembrane helix</keyword>
<keyword id="KW-0813">Transport</keyword>
<organism>
    <name type="scientific">Mycobacterium tuberculosis (strain CDC 1551 / Oshkosh)</name>
    <dbReference type="NCBI Taxonomy" id="83331"/>
    <lineage>
        <taxon>Bacteria</taxon>
        <taxon>Bacillati</taxon>
        <taxon>Actinomycetota</taxon>
        <taxon>Actinomycetes</taxon>
        <taxon>Mycobacteriales</taxon>
        <taxon>Mycobacteriaceae</taxon>
        <taxon>Mycobacterium</taxon>
        <taxon>Mycobacterium tuberculosis complex</taxon>
    </lineage>
</organism>
<accession>P9WL74</accession>
<accession>L0TBQ2</accession>
<accession>P65025</accession>
<accession>Q50633</accession>
<name>YAJC_MYCTO</name>
<comment type="function">
    <text evidence="1">The SecYEG-SecDF-YajC-YidC holo-translocon (HTL) protein secretase/insertase is a supercomplex required for protein secretion, insertion of proteins into membranes, and assembly of membrane protein complexes. While the SecYEG complex is essential for assembly of a number of proteins and complexes, the SecDF-YajC-YidC subcomplex facilitates these functions.</text>
</comment>
<comment type="subunit">
    <text evidence="1">Part of the SecDF-YidC-YajC translocase complex. The SecDF-YidC-YajC translocase forms a supercomplex with SecYEG, called the holo-translocon (HTL).</text>
</comment>
<comment type="subcellular location">
    <subcellularLocation>
        <location evidence="2">Cell membrane</location>
        <topology evidence="2">Single-pass membrane protein</topology>
    </subcellularLocation>
</comment>
<comment type="similarity">
    <text evidence="4">Belongs to the YajC family.</text>
</comment>
<dbReference type="EMBL" id="AE000516">
    <property type="protein sequence ID" value="AAK46978.1"/>
    <property type="molecule type" value="Genomic_DNA"/>
</dbReference>
<dbReference type="PIR" id="C70726">
    <property type="entry name" value="C70726"/>
</dbReference>
<dbReference type="RefSeq" id="WP_003413391.1">
    <property type="nucleotide sequence ID" value="NZ_KK341227.1"/>
</dbReference>
<dbReference type="SMR" id="P9WL74"/>
<dbReference type="GeneID" id="45426590"/>
<dbReference type="KEGG" id="mtc:MT2665"/>
<dbReference type="PATRIC" id="fig|83331.31.peg.2872"/>
<dbReference type="HOGENOM" id="CLU_116157_4_2_11"/>
<dbReference type="Proteomes" id="UP000001020">
    <property type="component" value="Chromosome"/>
</dbReference>
<dbReference type="GO" id="GO:0005886">
    <property type="term" value="C:plasma membrane"/>
    <property type="evidence" value="ECO:0007669"/>
    <property type="project" value="UniProtKB-SubCell"/>
</dbReference>
<dbReference type="GO" id="GO:0015031">
    <property type="term" value="P:protein transport"/>
    <property type="evidence" value="ECO:0007669"/>
    <property type="project" value="UniProtKB-KW"/>
</dbReference>
<dbReference type="InterPro" id="IPR003849">
    <property type="entry name" value="Preprotein_translocase_YajC"/>
</dbReference>
<dbReference type="NCBIfam" id="TIGR00739">
    <property type="entry name" value="yajC"/>
    <property type="match status" value="1"/>
</dbReference>
<dbReference type="PANTHER" id="PTHR33909">
    <property type="entry name" value="SEC TRANSLOCON ACCESSORY COMPLEX SUBUNIT YAJC"/>
    <property type="match status" value="1"/>
</dbReference>
<dbReference type="PANTHER" id="PTHR33909:SF1">
    <property type="entry name" value="SEC TRANSLOCON ACCESSORY COMPLEX SUBUNIT YAJC"/>
    <property type="match status" value="1"/>
</dbReference>
<dbReference type="Pfam" id="PF02699">
    <property type="entry name" value="YajC"/>
    <property type="match status" value="1"/>
</dbReference>
<dbReference type="SMART" id="SM01323">
    <property type="entry name" value="YajC"/>
    <property type="match status" value="1"/>
</dbReference>
<evidence type="ECO:0000250" key="1">
    <source>
        <dbReference type="UniProtKB" id="P0ADZ7"/>
    </source>
</evidence>
<evidence type="ECO:0000255" key="2"/>
<evidence type="ECO:0000256" key="3">
    <source>
        <dbReference type="SAM" id="MobiDB-lite"/>
    </source>
</evidence>
<evidence type="ECO:0000305" key="4"/>
<sequence>MESFVLFLPFLLIMGGFMYFASRRQRRAMQATIDLHDSLQPGERVHTTSGLEATIVAIADDTIDLEIAPGVVTTWMKLAIRDRILPDDDIDEELNEDLDKDVDDVAGERRVTNDS</sequence>
<protein>
    <recommendedName>
        <fullName>Sec translocon accessory complex subunit YajC</fullName>
    </recommendedName>
</protein>